<proteinExistence type="inferred from homology"/>
<organism>
    <name type="scientific">Legionella pneumophila subsp. pneumophila (strain Philadelphia 1 / ATCC 33152 / DSM 7513)</name>
    <dbReference type="NCBI Taxonomy" id="272624"/>
    <lineage>
        <taxon>Bacteria</taxon>
        <taxon>Pseudomonadati</taxon>
        <taxon>Pseudomonadota</taxon>
        <taxon>Gammaproteobacteria</taxon>
        <taxon>Legionellales</taxon>
        <taxon>Legionellaceae</taxon>
        <taxon>Legionella</taxon>
    </lineage>
</organism>
<gene>
    <name evidence="1" type="primary">murC</name>
    <name type="ordered locus">lpg2614</name>
</gene>
<feature type="chain" id="PRO_0000182109" description="UDP-N-acetylmuramate--L-alanine ligase">
    <location>
        <begin position="1"/>
        <end position="469"/>
    </location>
</feature>
<feature type="binding site" evidence="1">
    <location>
        <begin position="122"/>
        <end position="128"/>
    </location>
    <ligand>
        <name>ATP</name>
        <dbReference type="ChEBI" id="CHEBI:30616"/>
    </ligand>
</feature>
<evidence type="ECO:0000255" key="1">
    <source>
        <dbReference type="HAMAP-Rule" id="MF_00046"/>
    </source>
</evidence>
<protein>
    <recommendedName>
        <fullName evidence="1">UDP-N-acetylmuramate--L-alanine ligase</fullName>
        <ecNumber evidence="1">6.3.2.8</ecNumber>
    </recommendedName>
    <alternativeName>
        <fullName evidence="1">UDP-N-acetylmuramoyl-L-alanine synthetase</fullName>
    </alternativeName>
</protein>
<sequence>MNNSEQFLSPRMGRVEQIHFVGIGGAGMCGIAEVLHNQGYRITGSDLGESGTVQRLRSLGIQVYIGHRLENIKGADVVVRSSAVDFNNPEIVAARELMIPVIPRAAMLAELMRFRHGIAIAGTHGKTTTTSLVSSLLAEGGLDPSFVIGGKLNSCGANAQLGKSAYFVVEADESDASFLFLKPMMAVVTNIDADHMDTYEGDFEKLRTTFLEFLHHLPFYGLAVVCLEDEEICRILPAIQRPTLTYGFKEEAHYRAINWTQKGMLSEFVVVRPAPHKQLTIQFQYPGRHNVLNALASIAIATELGVDDDSIVRGLQKFQGVGRRFQMLGEKQFEKGAAIIVDDYGHHPQEILSTIDAFRRVWPERRLVHVFQPHRYTRTQSLHRQFVDVLSLSDELLLMDIYAAGETAIPGVTSENLANEIRSRDKRVTIVSEQSLKATLDEFIKDGDVILMQGAGSIGQIAVNLMKNM</sequence>
<dbReference type="EC" id="6.3.2.8" evidence="1"/>
<dbReference type="EMBL" id="AE017354">
    <property type="protein sequence ID" value="AAU28672.1"/>
    <property type="molecule type" value="Genomic_DNA"/>
</dbReference>
<dbReference type="RefSeq" id="WP_010948314.1">
    <property type="nucleotide sequence ID" value="NC_002942.5"/>
</dbReference>
<dbReference type="RefSeq" id="YP_096619.1">
    <property type="nucleotide sequence ID" value="NC_002942.5"/>
</dbReference>
<dbReference type="SMR" id="Q5ZSA5"/>
<dbReference type="STRING" id="272624.lpg2614"/>
<dbReference type="PaxDb" id="272624-lpg2614"/>
<dbReference type="GeneID" id="57036613"/>
<dbReference type="KEGG" id="lpn:lpg2614"/>
<dbReference type="PATRIC" id="fig|272624.6.peg.2789"/>
<dbReference type="eggNOG" id="COG0773">
    <property type="taxonomic scope" value="Bacteria"/>
</dbReference>
<dbReference type="HOGENOM" id="CLU_028104_2_2_6"/>
<dbReference type="OrthoDB" id="9804126at2"/>
<dbReference type="UniPathway" id="UPA00219"/>
<dbReference type="Proteomes" id="UP000000609">
    <property type="component" value="Chromosome"/>
</dbReference>
<dbReference type="GO" id="GO:0005737">
    <property type="term" value="C:cytoplasm"/>
    <property type="evidence" value="ECO:0007669"/>
    <property type="project" value="UniProtKB-SubCell"/>
</dbReference>
<dbReference type="GO" id="GO:0005524">
    <property type="term" value="F:ATP binding"/>
    <property type="evidence" value="ECO:0007669"/>
    <property type="project" value="UniProtKB-UniRule"/>
</dbReference>
<dbReference type="GO" id="GO:0008763">
    <property type="term" value="F:UDP-N-acetylmuramate-L-alanine ligase activity"/>
    <property type="evidence" value="ECO:0007669"/>
    <property type="project" value="UniProtKB-UniRule"/>
</dbReference>
<dbReference type="GO" id="GO:0051301">
    <property type="term" value="P:cell division"/>
    <property type="evidence" value="ECO:0007669"/>
    <property type="project" value="UniProtKB-KW"/>
</dbReference>
<dbReference type="GO" id="GO:0071555">
    <property type="term" value="P:cell wall organization"/>
    <property type="evidence" value="ECO:0007669"/>
    <property type="project" value="UniProtKB-KW"/>
</dbReference>
<dbReference type="GO" id="GO:0009252">
    <property type="term" value="P:peptidoglycan biosynthetic process"/>
    <property type="evidence" value="ECO:0007669"/>
    <property type="project" value="UniProtKB-UniRule"/>
</dbReference>
<dbReference type="GO" id="GO:0008360">
    <property type="term" value="P:regulation of cell shape"/>
    <property type="evidence" value="ECO:0007669"/>
    <property type="project" value="UniProtKB-KW"/>
</dbReference>
<dbReference type="FunFam" id="3.40.1190.10:FF:000001">
    <property type="entry name" value="UDP-N-acetylmuramate--L-alanine ligase"/>
    <property type="match status" value="1"/>
</dbReference>
<dbReference type="Gene3D" id="3.90.190.20">
    <property type="entry name" value="Mur ligase, C-terminal domain"/>
    <property type="match status" value="1"/>
</dbReference>
<dbReference type="Gene3D" id="3.40.1190.10">
    <property type="entry name" value="Mur-like, catalytic domain"/>
    <property type="match status" value="1"/>
</dbReference>
<dbReference type="Gene3D" id="3.40.50.720">
    <property type="entry name" value="NAD(P)-binding Rossmann-like Domain"/>
    <property type="match status" value="1"/>
</dbReference>
<dbReference type="HAMAP" id="MF_00046">
    <property type="entry name" value="MurC"/>
    <property type="match status" value="1"/>
</dbReference>
<dbReference type="InterPro" id="IPR036565">
    <property type="entry name" value="Mur-like_cat_sf"/>
</dbReference>
<dbReference type="InterPro" id="IPR004101">
    <property type="entry name" value="Mur_ligase_C"/>
</dbReference>
<dbReference type="InterPro" id="IPR036615">
    <property type="entry name" value="Mur_ligase_C_dom_sf"/>
</dbReference>
<dbReference type="InterPro" id="IPR013221">
    <property type="entry name" value="Mur_ligase_cen"/>
</dbReference>
<dbReference type="InterPro" id="IPR000713">
    <property type="entry name" value="Mur_ligase_N"/>
</dbReference>
<dbReference type="InterPro" id="IPR050061">
    <property type="entry name" value="MurCDEF_pg_biosynth"/>
</dbReference>
<dbReference type="InterPro" id="IPR005758">
    <property type="entry name" value="UDP-N-AcMur_Ala_ligase_MurC"/>
</dbReference>
<dbReference type="NCBIfam" id="TIGR01082">
    <property type="entry name" value="murC"/>
    <property type="match status" value="1"/>
</dbReference>
<dbReference type="PANTHER" id="PTHR43445:SF3">
    <property type="entry name" value="UDP-N-ACETYLMURAMATE--L-ALANINE LIGASE"/>
    <property type="match status" value="1"/>
</dbReference>
<dbReference type="PANTHER" id="PTHR43445">
    <property type="entry name" value="UDP-N-ACETYLMURAMATE--L-ALANINE LIGASE-RELATED"/>
    <property type="match status" value="1"/>
</dbReference>
<dbReference type="Pfam" id="PF01225">
    <property type="entry name" value="Mur_ligase"/>
    <property type="match status" value="1"/>
</dbReference>
<dbReference type="Pfam" id="PF02875">
    <property type="entry name" value="Mur_ligase_C"/>
    <property type="match status" value="1"/>
</dbReference>
<dbReference type="Pfam" id="PF08245">
    <property type="entry name" value="Mur_ligase_M"/>
    <property type="match status" value="1"/>
</dbReference>
<dbReference type="SUPFAM" id="SSF51984">
    <property type="entry name" value="MurCD N-terminal domain"/>
    <property type="match status" value="1"/>
</dbReference>
<dbReference type="SUPFAM" id="SSF53623">
    <property type="entry name" value="MurD-like peptide ligases, catalytic domain"/>
    <property type="match status" value="1"/>
</dbReference>
<dbReference type="SUPFAM" id="SSF53244">
    <property type="entry name" value="MurD-like peptide ligases, peptide-binding domain"/>
    <property type="match status" value="1"/>
</dbReference>
<comment type="function">
    <text evidence="1">Cell wall formation.</text>
</comment>
<comment type="catalytic activity">
    <reaction evidence="1">
        <text>UDP-N-acetyl-alpha-D-muramate + L-alanine + ATP = UDP-N-acetyl-alpha-D-muramoyl-L-alanine + ADP + phosphate + H(+)</text>
        <dbReference type="Rhea" id="RHEA:23372"/>
        <dbReference type="ChEBI" id="CHEBI:15378"/>
        <dbReference type="ChEBI" id="CHEBI:30616"/>
        <dbReference type="ChEBI" id="CHEBI:43474"/>
        <dbReference type="ChEBI" id="CHEBI:57972"/>
        <dbReference type="ChEBI" id="CHEBI:70757"/>
        <dbReference type="ChEBI" id="CHEBI:83898"/>
        <dbReference type="ChEBI" id="CHEBI:456216"/>
        <dbReference type="EC" id="6.3.2.8"/>
    </reaction>
</comment>
<comment type="pathway">
    <text evidence="1">Cell wall biogenesis; peptidoglycan biosynthesis.</text>
</comment>
<comment type="subcellular location">
    <subcellularLocation>
        <location evidence="1">Cytoplasm</location>
    </subcellularLocation>
</comment>
<comment type="similarity">
    <text evidence="1">Belongs to the MurCDEF family.</text>
</comment>
<name>MURC_LEGPH</name>
<reference key="1">
    <citation type="journal article" date="2004" name="Science">
        <title>The genomic sequence of the accidental pathogen Legionella pneumophila.</title>
        <authorList>
            <person name="Chien M."/>
            <person name="Morozova I."/>
            <person name="Shi S."/>
            <person name="Sheng H."/>
            <person name="Chen J."/>
            <person name="Gomez S.M."/>
            <person name="Asamani G."/>
            <person name="Hill K."/>
            <person name="Nuara J."/>
            <person name="Feder M."/>
            <person name="Rineer J."/>
            <person name="Greenberg J.J."/>
            <person name="Steshenko V."/>
            <person name="Park S.H."/>
            <person name="Zhao B."/>
            <person name="Teplitskaya E."/>
            <person name="Edwards J.R."/>
            <person name="Pampou S."/>
            <person name="Georghiou A."/>
            <person name="Chou I.-C."/>
            <person name="Iannuccilli W."/>
            <person name="Ulz M.E."/>
            <person name="Kim D.H."/>
            <person name="Geringer-Sameth A."/>
            <person name="Goldsberry C."/>
            <person name="Morozov P."/>
            <person name="Fischer S.G."/>
            <person name="Segal G."/>
            <person name="Qu X."/>
            <person name="Rzhetsky A."/>
            <person name="Zhang P."/>
            <person name="Cayanis E."/>
            <person name="De Jong P.J."/>
            <person name="Ju J."/>
            <person name="Kalachikov S."/>
            <person name="Shuman H.A."/>
            <person name="Russo J.J."/>
        </authorList>
    </citation>
    <scope>NUCLEOTIDE SEQUENCE [LARGE SCALE GENOMIC DNA]</scope>
    <source>
        <strain>Philadelphia 1 / ATCC 33152 / DSM 7513</strain>
    </source>
</reference>
<keyword id="KW-0067">ATP-binding</keyword>
<keyword id="KW-0131">Cell cycle</keyword>
<keyword id="KW-0132">Cell division</keyword>
<keyword id="KW-0133">Cell shape</keyword>
<keyword id="KW-0961">Cell wall biogenesis/degradation</keyword>
<keyword id="KW-0963">Cytoplasm</keyword>
<keyword id="KW-0436">Ligase</keyword>
<keyword id="KW-0547">Nucleotide-binding</keyword>
<keyword id="KW-0573">Peptidoglycan synthesis</keyword>
<keyword id="KW-1185">Reference proteome</keyword>
<accession>Q5ZSA5</accession>